<name>WHIA_LACH4</name>
<accession>A8YUD8</accession>
<feature type="chain" id="PRO_0000376501" description="Probable cell division protein WhiA">
    <location>
        <begin position="1"/>
        <end position="311"/>
    </location>
</feature>
<feature type="DNA-binding region" description="H-T-H motif" evidence="1">
    <location>
        <begin position="277"/>
        <end position="311"/>
    </location>
</feature>
<proteinExistence type="inferred from homology"/>
<protein>
    <recommendedName>
        <fullName evidence="1">Probable cell division protein WhiA</fullName>
    </recommendedName>
</protein>
<gene>
    <name evidence="1" type="primary">whiA</name>
    <name type="ordered locus">lhv_0734</name>
</gene>
<evidence type="ECO:0000255" key="1">
    <source>
        <dbReference type="HAMAP-Rule" id="MF_01420"/>
    </source>
</evidence>
<comment type="function">
    <text evidence="1">Involved in cell division and chromosome segregation.</text>
</comment>
<comment type="similarity">
    <text evidence="1">Belongs to the WhiA family.</text>
</comment>
<keyword id="KW-0131">Cell cycle</keyword>
<keyword id="KW-0132">Cell division</keyword>
<keyword id="KW-0238">DNA-binding</keyword>
<sequence>MASYASEVKKELTSLEVHPEHAKAELAAFLRMNGVLNLHDHQFSLDITTENPAIARRIFKLIKVAYGIEPLLIVSRKMKLKKNNQYLVRLNRDVQKILENLNIWDPAKGLVTRIPQRIMKSSEGAMSYLRGAFLAGGSVNNPETSRYHLEIYSTYEDHNEDLAKLMNEYFYLNAKMTKRRRGYIVYLKEAAKIGDFLHVVGALNAMLNFEDLRIMRDMRNSVNRLVNCDTANMKKTASASAKQVEDIQLIQKEKGIDSLPEKLQILARFRLAHPELTLKEVADQIPDGPISKSGVNHRFKKLHELAETLKE</sequence>
<reference key="1">
    <citation type="journal article" date="2008" name="J. Bacteriol.">
        <title>Genome sequence of Lactobacillus helveticus: an organism distinguished by selective gene loss and IS element expansion.</title>
        <authorList>
            <person name="Callanan M."/>
            <person name="Kaleta P."/>
            <person name="O'Callaghan J."/>
            <person name="O'Sullivan O."/>
            <person name="Jordan K."/>
            <person name="McAuliffe O."/>
            <person name="Sangrador-Vegas A."/>
            <person name="Slattery L."/>
            <person name="Fitzgerald G.F."/>
            <person name="Beresford T."/>
            <person name="Ross R.P."/>
        </authorList>
    </citation>
    <scope>NUCLEOTIDE SEQUENCE [LARGE SCALE GENOMIC DNA]</scope>
    <source>
        <strain>DPC 4571</strain>
    </source>
</reference>
<dbReference type="EMBL" id="CP000517">
    <property type="protein sequence ID" value="ABX26876.1"/>
    <property type="molecule type" value="Genomic_DNA"/>
</dbReference>
<dbReference type="RefSeq" id="WP_012211624.1">
    <property type="nucleotide sequence ID" value="NC_010080.1"/>
</dbReference>
<dbReference type="SMR" id="A8YUD8"/>
<dbReference type="GeneID" id="83724675"/>
<dbReference type="KEGG" id="lhe:lhv_0734"/>
<dbReference type="eggNOG" id="COG1481">
    <property type="taxonomic scope" value="Bacteria"/>
</dbReference>
<dbReference type="HOGENOM" id="CLU_053282_1_0_9"/>
<dbReference type="Proteomes" id="UP000000790">
    <property type="component" value="Chromosome"/>
</dbReference>
<dbReference type="GO" id="GO:0003677">
    <property type="term" value="F:DNA binding"/>
    <property type="evidence" value="ECO:0007669"/>
    <property type="project" value="UniProtKB-UniRule"/>
</dbReference>
<dbReference type="GO" id="GO:0051301">
    <property type="term" value="P:cell division"/>
    <property type="evidence" value="ECO:0007669"/>
    <property type="project" value="UniProtKB-UniRule"/>
</dbReference>
<dbReference type="GO" id="GO:0043937">
    <property type="term" value="P:regulation of sporulation"/>
    <property type="evidence" value="ECO:0007669"/>
    <property type="project" value="InterPro"/>
</dbReference>
<dbReference type="Gene3D" id="3.10.28.10">
    <property type="entry name" value="Homing endonucleases"/>
    <property type="match status" value="1"/>
</dbReference>
<dbReference type="HAMAP" id="MF_01420">
    <property type="entry name" value="HTH_type_WhiA"/>
    <property type="match status" value="1"/>
</dbReference>
<dbReference type="InterPro" id="IPR027434">
    <property type="entry name" value="Homing_endonucl"/>
</dbReference>
<dbReference type="InterPro" id="IPR018478">
    <property type="entry name" value="Sporu_reg_WhiA_N_dom"/>
</dbReference>
<dbReference type="InterPro" id="IPR003802">
    <property type="entry name" value="Sporulation_regulator_WhiA"/>
</dbReference>
<dbReference type="InterPro" id="IPR023054">
    <property type="entry name" value="Sporulation_regulator_WhiA_C"/>
</dbReference>
<dbReference type="InterPro" id="IPR039518">
    <property type="entry name" value="WhiA_LAGLIDADG_dom"/>
</dbReference>
<dbReference type="NCBIfam" id="TIGR00647">
    <property type="entry name" value="DNA_bind_WhiA"/>
    <property type="match status" value="1"/>
</dbReference>
<dbReference type="PANTHER" id="PTHR37307">
    <property type="entry name" value="CELL DIVISION PROTEIN WHIA-RELATED"/>
    <property type="match status" value="1"/>
</dbReference>
<dbReference type="PANTHER" id="PTHR37307:SF1">
    <property type="entry name" value="CELL DIVISION PROTEIN WHIA-RELATED"/>
    <property type="match status" value="1"/>
</dbReference>
<dbReference type="Pfam" id="PF02650">
    <property type="entry name" value="HTH_WhiA"/>
    <property type="match status" value="1"/>
</dbReference>
<dbReference type="Pfam" id="PF14527">
    <property type="entry name" value="LAGLIDADG_WhiA"/>
    <property type="match status" value="1"/>
</dbReference>
<dbReference type="Pfam" id="PF10298">
    <property type="entry name" value="WhiA_N"/>
    <property type="match status" value="1"/>
</dbReference>
<dbReference type="SUPFAM" id="SSF55608">
    <property type="entry name" value="Homing endonucleases"/>
    <property type="match status" value="1"/>
</dbReference>
<organism>
    <name type="scientific">Lactobacillus helveticus (strain DPC 4571)</name>
    <dbReference type="NCBI Taxonomy" id="405566"/>
    <lineage>
        <taxon>Bacteria</taxon>
        <taxon>Bacillati</taxon>
        <taxon>Bacillota</taxon>
        <taxon>Bacilli</taxon>
        <taxon>Lactobacillales</taxon>
        <taxon>Lactobacillaceae</taxon>
        <taxon>Lactobacillus</taxon>
    </lineage>
</organism>